<gene>
    <name type="primary">RGI1</name>
    <name type="ORF">CAWG_05915</name>
</gene>
<organism>
    <name type="scientific">Candida albicans (strain WO-1)</name>
    <name type="common">Yeast</name>
    <dbReference type="NCBI Taxonomy" id="294748"/>
    <lineage>
        <taxon>Eukaryota</taxon>
        <taxon>Fungi</taxon>
        <taxon>Dikarya</taxon>
        <taxon>Ascomycota</taxon>
        <taxon>Saccharomycotina</taxon>
        <taxon>Pichiomycetes</taxon>
        <taxon>Debaryomycetaceae</taxon>
        <taxon>Candida/Lodderomyces clade</taxon>
        <taxon>Candida</taxon>
    </lineage>
</organism>
<comment type="function">
    <text evidence="1">Involved in the control of energetic metabolism and significantly contribute to cell fitness, especially under respiratory growth conditions.</text>
</comment>
<comment type="subcellular location">
    <subcellularLocation>
        <location evidence="1">Cell membrane</location>
        <topology evidence="1">Peripheral membrane protein</topology>
    </subcellularLocation>
</comment>
<comment type="similarity">
    <text evidence="3">Belongs to the RGI1 family.</text>
</comment>
<evidence type="ECO:0000250" key="1"/>
<evidence type="ECO:0000256" key="2">
    <source>
        <dbReference type="SAM" id="MobiDB-lite"/>
    </source>
</evidence>
<evidence type="ECO:0000305" key="3"/>
<protein>
    <recommendedName>
        <fullName>Respiratory growth induced protein 1</fullName>
    </recommendedName>
</protein>
<keyword id="KW-1003">Cell membrane</keyword>
<keyword id="KW-0472">Membrane</keyword>
<sequence>MAGKKKSKSEALPLDLDNIKPMDHLQPVPKTRSSSITSIESADEPGTMKQVLLPPTIKEFDELEQFESFVRDETWDNDFDYFHGRLHYYPPFVMKSCQNNLEKIKPTMNKNSKKFRRDLQHHIQKHLIKDLEKCCGYELNFGKGEVVETDNKVTWKFKDETDHGFSKEEEDMYDRHWRLELDVSCTNESAMVDVEYKSIPM</sequence>
<proteinExistence type="inferred from homology"/>
<name>RGI1_CANAW</name>
<reference key="1">
    <citation type="journal article" date="2009" name="Nature">
        <title>Evolution of pathogenicity and sexual reproduction in eight Candida genomes.</title>
        <authorList>
            <person name="Butler G."/>
            <person name="Rasmussen M.D."/>
            <person name="Lin M.F."/>
            <person name="Santos M.A.S."/>
            <person name="Sakthikumar S."/>
            <person name="Munro C.A."/>
            <person name="Rheinbay E."/>
            <person name="Grabherr M."/>
            <person name="Forche A."/>
            <person name="Reedy J.L."/>
            <person name="Agrafioti I."/>
            <person name="Arnaud M.B."/>
            <person name="Bates S."/>
            <person name="Brown A.J.P."/>
            <person name="Brunke S."/>
            <person name="Costanzo M.C."/>
            <person name="Fitzpatrick D.A."/>
            <person name="de Groot P.W.J."/>
            <person name="Harris D."/>
            <person name="Hoyer L.L."/>
            <person name="Hube B."/>
            <person name="Klis F.M."/>
            <person name="Kodira C."/>
            <person name="Lennard N."/>
            <person name="Logue M.E."/>
            <person name="Martin R."/>
            <person name="Neiman A.M."/>
            <person name="Nikolaou E."/>
            <person name="Quail M.A."/>
            <person name="Quinn J."/>
            <person name="Santos M.C."/>
            <person name="Schmitzberger F.F."/>
            <person name="Sherlock G."/>
            <person name="Shah P."/>
            <person name="Silverstein K.A.T."/>
            <person name="Skrzypek M.S."/>
            <person name="Soll D."/>
            <person name="Staggs R."/>
            <person name="Stansfield I."/>
            <person name="Stumpf M.P.H."/>
            <person name="Sudbery P.E."/>
            <person name="Srikantha T."/>
            <person name="Zeng Q."/>
            <person name="Berman J."/>
            <person name="Berriman M."/>
            <person name="Heitman J."/>
            <person name="Gow N.A.R."/>
            <person name="Lorenz M.C."/>
            <person name="Birren B.W."/>
            <person name="Kellis M."/>
            <person name="Cuomo C.A."/>
        </authorList>
    </citation>
    <scope>NUCLEOTIDE SEQUENCE [LARGE SCALE GENOMIC DNA]</scope>
    <source>
        <strain>WO-1</strain>
    </source>
</reference>
<accession>C4YKB8</accession>
<feature type="chain" id="PRO_0000402280" description="Respiratory growth induced protein 1">
    <location>
        <begin position="1"/>
        <end position="201"/>
    </location>
</feature>
<feature type="region of interest" description="Disordered" evidence="2">
    <location>
        <begin position="1"/>
        <end position="45"/>
    </location>
</feature>
<feature type="compositionally biased region" description="Polar residues" evidence="2">
    <location>
        <begin position="31"/>
        <end position="40"/>
    </location>
</feature>
<dbReference type="EMBL" id="CH672354">
    <property type="protein sequence ID" value="EEQ47347.1"/>
    <property type="molecule type" value="Genomic_DNA"/>
</dbReference>
<dbReference type="SMR" id="C4YKB8"/>
<dbReference type="PaxDb" id="5476-C4YKB8"/>
<dbReference type="VEuPathDB" id="FungiDB:CAWG_05915"/>
<dbReference type="HOGENOM" id="CLU_118207_0_0_1"/>
<dbReference type="OMA" id="HLKYYPP"/>
<dbReference type="OrthoDB" id="1869at766764"/>
<dbReference type="Proteomes" id="UP000001429">
    <property type="component" value="Chromosome 2, Supercontig 1.9"/>
</dbReference>
<dbReference type="GO" id="GO:0005886">
    <property type="term" value="C:plasma membrane"/>
    <property type="evidence" value="ECO:0007669"/>
    <property type="project" value="UniProtKB-SubCell"/>
</dbReference>
<dbReference type="GO" id="GO:0006112">
    <property type="term" value="P:energy reserve metabolic process"/>
    <property type="evidence" value="ECO:0007669"/>
    <property type="project" value="InterPro"/>
</dbReference>
<dbReference type="Gene3D" id="3.40.1000.40">
    <property type="entry name" value="Respiratory growth induced protein 1"/>
    <property type="match status" value="1"/>
</dbReference>
<dbReference type="InterPro" id="IPR022554">
    <property type="entry name" value="RGI1"/>
</dbReference>
<dbReference type="InterPro" id="IPR038235">
    <property type="entry name" value="RGI1_sf"/>
</dbReference>
<dbReference type="Pfam" id="PF10843">
    <property type="entry name" value="RGI1"/>
    <property type="match status" value="1"/>
</dbReference>